<accession>Q9ZMV8</accession>
<organism>
    <name type="scientific">Helicobacter pylori (strain J99 / ATCC 700824)</name>
    <name type="common">Campylobacter pylori J99</name>
    <dbReference type="NCBI Taxonomy" id="85963"/>
    <lineage>
        <taxon>Bacteria</taxon>
        <taxon>Pseudomonadati</taxon>
        <taxon>Campylobacterota</taxon>
        <taxon>Epsilonproteobacteria</taxon>
        <taxon>Campylobacterales</taxon>
        <taxon>Helicobacteraceae</taxon>
        <taxon>Helicobacter</taxon>
    </lineage>
</organism>
<evidence type="ECO:0000305" key="1"/>
<comment type="function">
    <text>Flagellin is the subunit protein which polymerizes to form the filaments of bacterial flagella. Important for motility and virulence.</text>
</comment>
<comment type="subunit">
    <text>Heteromer of FlaA and FlaB. FlaB is located proximal to the hook while the remainder of the filament is composed of the predominant FlaA.</text>
</comment>
<comment type="subcellular location">
    <subcellularLocation>
        <location>Secreted</location>
    </subcellularLocation>
    <subcellularLocation>
        <location>Bacterial flagellum</location>
    </subcellularLocation>
</comment>
<comment type="similarity">
    <text evidence="1">Belongs to the bacterial flagellin family.</text>
</comment>
<feature type="initiator methionine" description="Removed">
    <location>
        <position position="1"/>
    </location>
</feature>
<feature type="chain" id="PRO_0000182613" description="Flagellin B">
    <location>
        <begin position="2"/>
        <end position="514"/>
    </location>
</feature>
<protein>
    <recommendedName>
        <fullName>Flagellin B</fullName>
    </recommendedName>
    <alternativeName>
        <fullName>Flagellin N</fullName>
    </alternativeName>
</protein>
<proteinExistence type="inferred from homology"/>
<reference key="1">
    <citation type="journal article" date="1999" name="Nature">
        <title>Genomic sequence comparison of two unrelated isolates of the human gastric pathogen Helicobacter pylori.</title>
        <authorList>
            <person name="Alm R.A."/>
            <person name="Ling L.-S.L."/>
            <person name="Moir D.T."/>
            <person name="King B.L."/>
            <person name="Brown E.D."/>
            <person name="Doig P.C."/>
            <person name="Smith D.R."/>
            <person name="Noonan B."/>
            <person name="Guild B.C."/>
            <person name="deJonge B.L."/>
            <person name="Carmel G."/>
            <person name="Tummino P.J."/>
            <person name="Caruso A."/>
            <person name="Uria-Nickelsen M."/>
            <person name="Mills D.M."/>
            <person name="Ives C."/>
            <person name="Gibson R."/>
            <person name="Merberg D."/>
            <person name="Mills S.D."/>
            <person name="Jiang Q."/>
            <person name="Taylor D.E."/>
            <person name="Vovis G.F."/>
            <person name="Trust T.J."/>
        </authorList>
    </citation>
    <scope>NUCLEOTIDE SEQUENCE [LARGE SCALE GENOMIC DNA]</scope>
    <source>
        <strain>J99 / ATCC 700824</strain>
    </source>
</reference>
<name>FLAB_HELPJ</name>
<gene>
    <name type="primary">flaB</name>
    <name type="ordered locus">jhp_0107</name>
</gene>
<dbReference type="EMBL" id="AE001439">
    <property type="protein sequence ID" value="AAD05686.1"/>
    <property type="molecule type" value="Genomic_DNA"/>
</dbReference>
<dbReference type="PIR" id="E71974">
    <property type="entry name" value="E71974"/>
</dbReference>
<dbReference type="RefSeq" id="WP_000010021.1">
    <property type="nucleotide sequence ID" value="NZ_CP011330.1"/>
</dbReference>
<dbReference type="SMR" id="Q9ZMV8"/>
<dbReference type="KEGG" id="hpj:jhp_0107"/>
<dbReference type="PATRIC" id="fig|85963.30.peg.921"/>
<dbReference type="eggNOG" id="COG1344">
    <property type="taxonomic scope" value="Bacteria"/>
</dbReference>
<dbReference type="Proteomes" id="UP000000804">
    <property type="component" value="Chromosome"/>
</dbReference>
<dbReference type="GO" id="GO:0009288">
    <property type="term" value="C:bacterial-type flagellum"/>
    <property type="evidence" value="ECO:0007669"/>
    <property type="project" value="UniProtKB-SubCell"/>
</dbReference>
<dbReference type="GO" id="GO:0005576">
    <property type="term" value="C:extracellular region"/>
    <property type="evidence" value="ECO:0007669"/>
    <property type="project" value="UniProtKB-SubCell"/>
</dbReference>
<dbReference type="GO" id="GO:0005198">
    <property type="term" value="F:structural molecule activity"/>
    <property type="evidence" value="ECO:0007669"/>
    <property type="project" value="InterPro"/>
</dbReference>
<dbReference type="Gene3D" id="3.30.70.2120">
    <property type="match status" value="1"/>
</dbReference>
<dbReference type="Gene3D" id="1.20.1330.10">
    <property type="entry name" value="f41 fragment of flagellin, N-terminal domain"/>
    <property type="match status" value="1"/>
</dbReference>
<dbReference type="Gene3D" id="6.10.10.10">
    <property type="entry name" value="Flagellar export chaperone, C-terminal domain"/>
    <property type="match status" value="1"/>
</dbReference>
<dbReference type="InterPro" id="IPR001492">
    <property type="entry name" value="Flagellin"/>
</dbReference>
<dbReference type="InterPro" id="IPR046358">
    <property type="entry name" value="Flagellin_C"/>
</dbReference>
<dbReference type="InterPro" id="IPR042187">
    <property type="entry name" value="Flagellin_C_sub2"/>
</dbReference>
<dbReference type="InterPro" id="IPR010810">
    <property type="entry name" value="Flagellin_hook_IN_motif"/>
</dbReference>
<dbReference type="InterPro" id="IPR001029">
    <property type="entry name" value="Flagellin_N"/>
</dbReference>
<dbReference type="NCBIfam" id="NF010115">
    <property type="entry name" value="PRK13588.1"/>
    <property type="match status" value="1"/>
</dbReference>
<dbReference type="PANTHER" id="PTHR42792">
    <property type="entry name" value="FLAGELLIN"/>
    <property type="match status" value="1"/>
</dbReference>
<dbReference type="PANTHER" id="PTHR42792:SF2">
    <property type="entry name" value="FLAGELLIN"/>
    <property type="match status" value="1"/>
</dbReference>
<dbReference type="Pfam" id="PF00700">
    <property type="entry name" value="Flagellin_C"/>
    <property type="match status" value="1"/>
</dbReference>
<dbReference type="Pfam" id="PF07196">
    <property type="entry name" value="Flagellin_IN"/>
    <property type="match status" value="2"/>
</dbReference>
<dbReference type="Pfam" id="PF00669">
    <property type="entry name" value="Flagellin_N"/>
    <property type="match status" value="1"/>
</dbReference>
<dbReference type="PRINTS" id="PR00207">
    <property type="entry name" value="FLAGELLIN"/>
</dbReference>
<dbReference type="SUPFAM" id="SSF64518">
    <property type="entry name" value="Phase 1 flagellin"/>
    <property type="match status" value="1"/>
</dbReference>
<keyword id="KW-0975">Bacterial flagellum</keyword>
<keyword id="KW-0964">Secreted</keyword>
<keyword id="KW-0843">Virulence</keyword>
<sequence>MSFRINTNIAALTSHAVGVQNNRDLSSSLEKLSSGLRINKAADDSSGMAIADSLRSQSANLGQAIRNANDAIGMVQTADKAMDEQIKILDTIKTKAVQAAQDGQTLESRRALQSDIQRLLEELDNIANTTSFNGQQMLSGSFSNKEFQIGAYSNTTVKASIGSTSSDKIGHVRMETSSFSGEGMLASAAAQNLTEVGLNFKQVNGVNDYKIETVRISTSAGTGIGALSEIINRFSNTLGVRASYNVMATGGTPVQSGTVRELTINGVEIGTVNDVHKNDADGRLTNAINSVKDRTGVEASLDIQGRINLHSIDGRAISVHAASASGQVFGGGNFAGISGTQHAVIGRLTLTRTDARDIIVSGVNFSHVGFHSAQGVAEYTVNLRAVRGIFDANVASAAGANANGAQAETNSQGIGAGVTSLKGAMIVMDMADSARTQLDKIRSDMGSVQMELVTTINNISVTQVNVKAAESQIRDVDFAEESANFSKYNILAQSGSFAMAQANAVQQNVLRLLQ</sequence>